<sequence>MRKLSWQHIVLIVLAIILILWIISLLLCRKPVRPTYQVPIIQPMQVIQPHQNDIDPAWQTTYSPNNTDNQNQQYVLYYFNNPSCPHCKNFSSTWDMLKNNFRSINNLSLKEISTDKQENEHLVFYYNIRRVPTIILVTPDKNLEYSGNKSLEDLTQFIRSNMNQ</sequence>
<organism>
    <name type="scientific">Acanthamoeba polyphaga mimivirus</name>
    <name type="common">APMV</name>
    <dbReference type="NCBI Taxonomy" id="212035"/>
    <lineage>
        <taxon>Viruses</taxon>
        <taxon>Varidnaviria</taxon>
        <taxon>Bamfordvirae</taxon>
        <taxon>Nucleocytoviricota</taxon>
        <taxon>Megaviricetes</taxon>
        <taxon>Imitervirales</taxon>
        <taxon>Mimiviridae</taxon>
        <taxon>Megamimivirinae</taxon>
        <taxon>Mimivirus</taxon>
        <taxon>Mimivirus bradfordmassiliense</taxon>
    </lineage>
</organism>
<comment type="subcellular location">
    <subcellularLocation>
        <location evidence="4">Host membrane</location>
        <topology evidence="4">Single-pass membrane protein</topology>
    </subcellularLocation>
    <subcellularLocation>
        <location evidence="3">Virion</location>
    </subcellularLocation>
</comment>
<comment type="similarity">
    <text evidence="4">Belongs to the thioredoxin family.</text>
</comment>
<evidence type="ECO:0000255" key="1"/>
<evidence type="ECO:0000255" key="2">
    <source>
        <dbReference type="PROSITE-ProRule" id="PRU00691"/>
    </source>
</evidence>
<evidence type="ECO:0000269" key="3">
    <source>
    </source>
</evidence>
<evidence type="ECO:0000305" key="4"/>
<organismHost>
    <name type="scientific">Acanthamoeba polyphaga</name>
    <name type="common">Amoeba</name>
    <dbReference type="NCBI Taxonomy" id="5757"/>
</organismHost>
<protein>
    <recommendedName>
        <fullName>Thioredoxin domain-containing protein R443</fullName>
    </recommendedName>
</protein>
<dbReference type="EMBL" id="AY653733">
    <property type="protein sequence ID" value="AAV50709.1"/>
    <property type="molecule type" value="Genomic_DNA"/>
</dbReference>
<dbReference type="SMR" id="Q5UQN5"/>
<dbReference type="KEGG" id="vg:9925067"/>
<dbReference type="Proteomes" id="UP000001134">
    <property type="component" value="Genome"/>
</dbReference>
<dbReference type="GO" id="GO:0033644">
    <property type="term" value="C:host cell membrane"/>
    <property type="evidence" value="ECO:0007669"/>
    <property type="project" value="UniProtKB-SubCell"/>
</dbReference>
<dbReference type="GO" id="GO:0016020">
    <property type="term" value="C:membrane"/>
    <property type="evidence" value="ECO:0007669"/>
    <property type="project" value="UniProtKB-KW"/>
</dbReference>
<dbReference type="GO" id="GO:0044423">
    <property type="term" value="C:virion component"/>
    <property type="evidence" value="ECO:0007669"/>
    <property type="project" value="UniProtKB-KW"/>
</dbReference>
<dbReference type="GO" id="GO:0003756">
    <property type="term" value="F:protein disulfide isomerase activity"/>
    <property type="evidence" value="ECO:0007669"/>
    <property type="project" value="TreeGrafter"/>
</dbReference>
<dbReference type="GO" id="GO:0006457">
    <property type="term" value="P:protein folding"/>
    <property type="evidence" value="ECO:0007669"/>
    <property type="project" value="TreeGrafter"/>
</dbReference>
<dbReference type="CDD" id="cd02961">
    <property type="entry name" value="PDI_a_family"/>
    <property type="match status" value="1"/>
</dbReference>
<dbReference type="Gene3D" id="3.40.30.10">
    <property type="entry name" value="Glutaredoxin"/>
    <property type="match status" value="1"/>
</dbReference>
<dbReference type="InterPro" id="IPR051063">
    <property type="entry name" value="PDI"/>
</dbReference>
<dbReference type="InterPro" id="IPR036249">
    <property type="entry name" value="Thioredoxin-like_sf"/>
</dbReference>
<dbReference type="InterPro" id="IPR013766">
    <property type="entry name" value="Thioredoxin_domain"/>
</dbReference>
<dbReference type="PANTHER" id="PTHR45672">
    <property type="entry name" value="PROTEIN DISULFIDE-ISOMERASE C17H9.14C-RELATED"/>
    <property type="match status" value="1"/>
</dbReference>
<dbReference type="Pfam" id="PF00085">
    <property type="entry name" value="Thioredoxin"/>
    <property type="match status" value="1"/>
</dbReference>
<dbReference type="SUPFAM" id="SSF52833">
    <property type="entry name" value="Thioredoxin-like"/>
    <property type="match status" value="1"/>
</dbReference>
<dbReference type="PROSITE" id="PS51352">
    <property type="entry name" value="THIOREDOXIN_2"/>
    <property type="match status" value="1"/>
</dbReference>
<gene>
    <name type="ordered locus">MIMI_R443</name>
</gene>
<reference key="1">
    <citation type="journal article" date="2004" name="Science">
        <title>The 1.2-megabase genome sequence of Mimivirus.</title>
        <authorList>
            <person name="Raoult D."/>
            <person name="Audic S."/>
            <person name="Robert C."/>
            <person name="Abergel C."/>
            <person name="Renesto P."/>
            <person name="Ogata H."/>
            <person name="La Scola B."/>
            <person name="Susan M."/>
            <person name="Claverie J.-M."/>
        </authorList>
    </citation>
    <scope>NUCLEOTIDE SEQUENCE [LARGE SCALE GENOMIC DNA]</scope>
    <source>
        <strain>Rowbotham-Bradford</strain>
    </source>
</reference>
<reference key="2">
    <citation type="journal article" date="2006" name="J. Virol.">
        <title>Mimivirus giant particles incorporate a large fraction of anonymous and unique gene products.</title>
        <authorList>
            <person name="Renesto P."/>
            <person name="Abergel C."/>
            <person name="Decloquement P."/>
            <person name="Moinier D."/>
            <person name="Azza S."/>
            <person name="Ogata H."/>
            <person name="Fourquet P."/>
            <person name="Gorvel J.-P."/>
            <person name="Claverie J.-M."/>
            <person name="Raoult D."/>
        </authorList>
    </citation>
    <scope>IDENTIFICATION BY MASS SPECTROMETRY [LARGE SCALE ANALYSIS]</scope>
    <scope>SUBCELLULAR LOCATION</scope>
</reference>
<accession>Q5UQN5</accession>
<feature type="chain" id="PRO_0000243952" description="Thioredoxin domain-containing protein R443">
    <location>
        <begin position="1"/>
        <end position="164"/>
    </location>
</feature>
<feature type="transmembrane region" description="Helical" evidence="1">
    <location>
        <begin position="8"/>
        <end position="28"/>
    </location>
</feature>
<feature type="domain" description="Thioredoxin" evidence="2">
    <location>
        <begin position="36"/>
        <end position="163"/>
    </location>
</feature>
<feature type="disulfide bond" description="Redox-active" evidence="2">
    <location>
        <begin position="84"/>
        <end position="87"/>
    </location>
</feature>
<keyword id="KW-1015">Disulfide bond</keyword>
<keyword id="KW-1043">Host membrane</keyword>
<keyword id="KW-0472">Membrane</keyword>
<keyword id="KW-0676">Redox-active center</keyword>
<keyword id="KW-1185">Reference proteome</keyword>
<keyword id="KW-0812">Transmembrane</keyword>
<keyword id="KW-1133">Transmembrane helix</keyword>
<keyword id="KW-0946">Virion</keyword>
<name>TR443_MIMIV</name>
<proteinExistence type="evidence at protein level"/>